<name>NHAP2_SHEB2</name>
<dbReference type="EMBL" id="CP001252">
    <property type="protein sequence ID" value="ACK45453.1"/>
    <property type="molecule type" value="Genomic_DNA"/>
</dbReference>
<dbReference type="RefSeq" id="WP_006082903.1">
    <property type="nucleotide sequence ID" value="NC_011663.1"/>
</dbReference>
<dbReference type="SMR" id="B8EE41"/>
<dbReference type="KEGG" id="sbp:Sbal223_0935"/>
<dbReference type="HOGENOM" id="CLU_005912_9_2_6"/>
<dbReference type="Proteomes" id="UP000002507">
    <property type="component" value="Chromosome"/>
</dbReference>
<dbReference type="GO" id="GO:0005886">
    <property type="term" value="C:plasma membrane"/>
    <property type="evidence" value="ECO:0007669"/>
    <property type="project" value="UniProtKB-SubCell"/>
</dbReference>
<dbReference type="GO" id="GO:0050660">
    <property type="term" value="F:flavin adenine dinucleotide binding"/>
    <property type="evidence" value="ECO:0007669"/>
    <property type="project" value="InterPro"/>
</dbReference>
<dbReference type="GO" id="GO:0015386">
    <property type="term" value="F:potassium:proton antiporter activity"/>
    <property type="evidence" value="ECO:0007669"/>
    <property type="project" value="UniProtKB-UniRule"/>
</dbReference>
<dbReference type="GO" id="GO:0006884">
    <property type="term" value="P:cell volume homeostasis"/>
    <property type="evidence" value="ECO:0007669"/>
    <property type="project" value="InterPro"/>
</dbReference>
<dbReference type="Gene3D" id="1.20.1530.20">
    <property type="match status" value="1"/>
</dbReference>
<dbReference type="Gene3D" id="3.30.70.1450">
    <property type="entry name" value="Regulator of K+ conductance, C-terminal domain"/>
    <property type="match status" value="1"/>
</dbReference>
<dbReference type="HAMAP" id="MF_01075">
    <property type="entry name" value="NhaP2"/>
    <property type="match status" value="1"/>
</dbReference>
<dbReference type="InterPro" id="IPR006153">
    <property type="entry name" value="Cation/H_exchanger_TM"/>
</dbReference>
<dbReference type="InterPro" id="IPR036318">
    <property type="entry name" value="FAD-bd_PCMH-like_sf"/>
</dbReference>
<dbReference type="InterPro" id="IPR038770">
    <property type="entry name" value="Na+/solute_symporter_sf"/>
</dbReference>
<dbReference type="InterPro" id="IPR023729">
    <property type="entry name" value="NhaP2"/>
</dbReference>
<dbReference type="InterPro" id="IPR006037">
    <property type="entry name" value="RCK_C"/>
</dbReference>
<dbReference type="InterPro" id="IPR036721">
    <property type="entry name" value="RCK_C_sf"/>
</dbReference>
<dbReference type="InterPro" id="IPR005170">
    <property type="entry name" value="Transptr-assoc_dom"/>
</dbReference>
<dbReference type="NCBIfam" id="NF003714">
    <property type="entry name" value="PRK05326.1-1"/>
    <property type="match status" value="1"/>
</dbReference>
<dbReference type="NCBIfam" id="NF003715">
    <property type="entry name" value="PRK05326.1-2"/>
    <property type="match status" value="1"/>
</dbReference>
<dbReference type="NCBIfam" id="NF003716">
    <property type="entry name" value="PRK05326.1-3"/>
    <property type="match status" value="1"/>
</dbReference>
<dbReference type="PANTHER" id="PTHR32507:SF7">
    <property type="entry name" value="K(+)_H(+) ANTIPORTER NHAP2"/>
    <property type="match status" value="1"/>
</dbReference>
<dbReference type="PANTHER" id="PTHR32507">
    <property type="entry name" value="NA(+)/H(+) ANTIPORTER 1"/>
    <property type="match status" value="1"/>
</dbReference>
<dbReference type="Pfam" id="PF03471">
    <property type="entry name" value="CorC_HlyC"/>
    <property type="match status" value="1"/>
</dbReference>
<dbReference type="Pfam" id="PF00999">
    <property type="entry name" value="Na_H_Exchanger"/>
    <property type="match status" value="1"/>
</dbReference>
<dbReference type="Pfam" id="PF02080">
    <property type="entry name" value="TrkA_C"/>
    <property type="match status" value="1"/>
</dbReference>
<dbReference type="SMART" id="SM01091">
    <property type="entry name" value="CorC_HlyC"/>
    <property type="match status" value="1"/>
</dbReference>
<dbReference type="SUPFAM" id="SSF56176">
    <property type="entry name" value="FAD-binding/transporter-associated domain-like"/>
    <property type="match status" value="1"/>
</dbReference>
<dbReference type="SUPFAM" id="SSF116726">
    <property type="entry name" value="TrkA C-terminal domain-like"/>
    <property type="match status" value="1"/>
</dbReference>
<dbReference type="PROSITE" id="PS51202">
    <property type="entry name" value="RCK_C"/>
    <property type="match status" value="1"/>
</dbReference>
<comment type="function">
    <text evidence="1">K(+)/H(+) antiporter that extrudes potassium in exchange for external protons and maintains the internal concentration of potassium under toxic levels.</text>
</comment>
<comment type="catalytic activity">
    <reaction evidence="1">
        <text>K(+)(in) + H(+)(out) = K(+)(out) + H(+)(in)</text>
        <dbReference type="Rhea" id="RHEA:29467"/>
        <dbReference type="ChEBI" id="CHEBI:15378"/>
        <dbReference type="ChEBI" id="CHEBI:29103"/>
    </reaction>
    <physiologicalReaction direction="left-to-right" evidence="1">
        <dbReference type="Rhea" id="RHEA:29468"/>
    </physiologicalReaction>
</comment>
<comment type="subcellular location">
    <subcellularLocation>
        <location evidence="1">Cell inner membrane</location>
        <topology evidence="1">Multi-pass membrane protein</topology>
    </subcellularLocation>
</comment>
<comment type="similarity">
    <text evidence="1">Belongs to the monovalent cation:proton antiporter 1 (CPA1) transporter (TC 2.A.36) family. NhaP2 subfamily.</text>
</comment>
<feature type="chain" id="PRO_1000149775" description="K(+)/H(+) antiporter NhaP2">
    <location>
        <begin position="1"/>
        <end position="576"/>
    </location>
</feature>
<feature type="transmembrane region" description="Helical" evidence="1">
    <location>
        <begin position="6"/>
        <end position="26"/>
    </location>
</feature>
<feature type="transmembrane region" description="Helical" evidence="1">
    <location>
        <begin position="34"/>
        <end position="54"/>
    </location>
</feature>
<feature type="transmembrane region" description="Helical" evidence="1">
    <location>
        <begin position="58"/>
        <end position="78"/>
    </location>
</feature>
<feature type="transmembrane region" description="Helical" evidence="1">
    <location>
        <begin position="87"/>
        <end position="107"/>
    </location>
</feature>
<feature type="transmembrane region" description="Helical" evidence="1">
    <location>
        <begin position="109"/>
        <end position="129"/>
    </location>
</feature>
<feature type="transmembrane region" description="Helical" evidence="1">
    <location>
        <begin position="163"/>
        <end position="183"/>
    </location>
</feature>
<feature type="transmembrane region" description="Helical" evidence="1">
    <location>
        <begin position="185"/>
        <end position="205"/>
    </location>
</feature>
<feature type="transmembrane region" description="Helical" evidence="1">
    <location>
        <begin position="219"/>
        <end position="239"/>
    </location>
</feature>
<feature type="transmembrane region" description="Helical" evidence="1">
    <location>
        <begin position="242"/>
        <end position="262"/>
    </location>
</feature>
<feature type="transmembrane region" description="Helical" evidence="1">
    <location>
        <begin position="271"/>
        <end position="291"/>
    </location>
</feature>
<feature type="transmembrane region" description="Helical" evidence="1">
    <location>
        <begin position="299"/>
        <end position="319"/>
    </location>
</feature>
<feature type="transmembrane region" description="Helical" evidence="1">
    <location>
        <begin position="335"/>
        <end position="355"/>
    </location>
</feature>
<feature type="transmembrane region" description="Helical" evidence="1">
    <location>
        <begin position="359"/>
        <end position="379"/>
    </location>
</feature>
<feature type="domain" description="RCK C-terminal" evidence="1">
    <location>
        <begin position="405"/>
        <end position="486"/>
    </location>
</feature>
<proteinExistence type="inferred from homology"/>
<gene>
    <name evidence="1" type="primary">nhaP2</name>
    <name type="synonym">cvrA</name>
    <name type="ordered locus">Sbal223_0935</name>
</gene>
<evidence type="ECO:0000255" key="1">
    <source>
        <dbReference type="HAMAP-Rule" id="MF_01075"/>
    </source>
</evidence>
<organism>
    <name type="scientific">Shewanella baltica (strain OS223)</name>
    <dbReference type="NCBI Taxonomy" id="407976"/>
    <lineage>
        <taxon>Bacteria</taxon>
        <taxon>Pseudomonadati</taxon>
        <taxon>Pseudomonadota</taxon>
        <taxon>Gammaproteobacteria</taxon>
        <taxon>Alteromonadales</taxon>
        <taxon>Shewanellaceae</taxon>
        <taxon>Shewanella</taxon>
    </lineage>
</organism>
<sequence length="576" mass="61957">MDANSINSFFLIGALLTAVSVLLSPMSSRLGIPILLIFLAVGILAGEDGPGGILFDDYSTAYLVSNLALAIILLDGGMRTRVASFRVALWPALSLATFGVAITTSITGMMAAWLFDLHWLQGLLVGAIVGSTDAAAVFSLLKGRSLNERVGATLEIESGSNDPMAVFLTVTLIAILANVDTEMSFSFMFISFIKQFGLGICLGLGGGWMLWKLVNLSKLADGLYSILVLSGGLIIYAASNKLGGSGILSIYLVGLFLGNKPTRGRHAILNVLDGMTWVSQIGMFLVLGLLLTPSDLVDILIPGFALAFGMILFARPVAVWISLLPFKSFSSRDRWFISWVGLRGAVPIILAVFPMMAGLPGAQLYFNLAFFVVLVSLLVQGASLTTAARLAKVELPPKPLPVSRSGVEIYPSSEWEVFVYRLSESKWCIGEPLKRLAMPDGTRIAAVFRNDTLLHPSGSTRLEAGDILCVLGQEKSLEALSNLFSQAPENKEVQRFFGDFFIETDVKLADLAPIYGLSLDNLADDMTVADLVVSQLGANPVLGDQFQWQSLHWVVAGLYEGKVTNVGIRLPTEHSL</sequence>
<reference key="1">
    <citation type="submission" date="2008-12" db="EMBL/GenBank/DDBJ databases">
        <title>Complete sequence of chromosome of Shewanella baltica OS223.</title>
        <authorList>
            <consortium name="US DOE Joint Genome Institute"/>
            <person name="Lucas S."/>
            <person name="Copeland A."/>
            <person name="Lapidus A."/>
            <person name="Glavina del Rio T."/>
            <person name="Dalin E."/>
            <person name="Tice H."/>
            <person name="Bruce D."/>
            <person name="Goodwin L."/>
            <person name="Pitluck S."/>
            <person name="Chertkov O."/>
            <person name="Meincke L."/>
            <person name="Brettin T."/>
            <person name="Detter J.C."/>
            <person name="Han C."/>
            <person name="Kuske C.R."/>
            <person name="Larimer F."/>
            <person name="Land M."/>
            <person name="Hauser L."/>
            <person name="Kyrpides N."/>
            <person name="Ovchinnikova G."/>
            <person name="Brettar I."/>
            <person name="Rodrigues J."/>
            <person name="Konstantinidis K."/>
            <person name="Tiedje J."/>
        </authorList>
    </citation>
    <scope>NUCLEOTIDE SEQUENCE [LARGE SCALE GENOMIC DNA]</scope>
    <source>
        <strain>OS223</strain>
    </source>
</reference>
<keyword id="KW-0050">Antiport</keyword>
<keyword id="KW-0997">Cell inner membrane</keyword>
<keyword id="KW-1003">Cell membrane</keyword>
<keyword id="KW-0406">Ion transport</keyword>
<keyword id="KW-0472">Membrane</keyword>
<keyword id="KW-0630">Potassium</keyword>
<keyword id="KW-0633">Potassium transport</keyword>
<keyword id="KW-0812">Transmembrane</keyword>
<keyword id="KW-1133">Transmembrane helix</keyword>
<keyword id="KW-0813">Transport</keyword>
<protein>
    <recommendedName>
        <fullName evidence="1">K(+)/H(+) antiporter NhaP2</fullName>
    </recommendedName>
    <alternativeName>
        <fullName evidence="1">Potassium/proton antiporter NhaP2</fullName>
    </alternativeName>
</protein>
<accession>B8EE41</accession>